<reference key="1">
    <citation type="journal article" date="2006" name="J. Bacteriol.">
        <title>Comparison of the genome sequence of the poultry pathogen Bordetella avium with those of B. bronchiseptica, B. pertussis, and B. parapertussis reveals extensive diversity in surface structures associated with host interaction.</title>
        <authorList>
            <person name="Sebaihia M."/>
            <person name="Preston A."/>
            <person name="Maskell D.J."/>
            <person name="Kuzmiak H."/>
            <person name="Connell T.D."/>
            <person name="King N.D."/>
            <person name="Orndorff P.E."/>
            <person name="Miyamoto D.M."/>
            <person name="Thomson N.R."/>
            <person name="Harris D."/>
            <person name="Goble A."/>
            <person name="Lord A."/>
            <person name="Murphy L."/>
            <person name="Quail M.A."/>
            <person name="Rutter S."/>
            <person name="Squares R."/>
            <person name="Squares S."/>
            <person name="Woodward J."/>
            <person name="Parkhill J."/>
            <person name="Temple L.M."/>
        </authorList>
    </citation>
    <scope>NUCLEOTIDE SEQUENCE [LARGE SCALE GENOMIC DNA]</scope>
    <source>
        <strain>197N</strain>
    </source>
</reference>
<comment type="function">
    <text evidence="1">Part of the Sec protein translocase complex. Interacts with the SecYEG preprotein conducting channel. Has a central role in coupling the hydrolysis of ATP to the transfer of proteins into and across the cell membrane, serving both as a receptor for the preprotein-SecB complex and as an ATP-driven molecular motor driving the stepwise translocation of polypeptide chains across the membrane.</text>
</comment>
<comment type="catalytic activity">
    <reaction evidence="1">
        <text>ATP + H2O + cellular proteinSide 1 = ADP + phosphate + cellular proteinSide 2.</text>
        <dbReference type="EC" id="7.4.2.8"/>
    </reaction>
</comment>
<comment type="subunit">
    <text evidence="1">Monomer and homodimer. Part of the essential Sec protein translocation apparatus which comprises SecA, SecYEG and auxiliary proteins SecDF-YajC and YidC.</text>
</comment>
<comment type="subcellular location">
    <subcellularLocation>
        <location evidence="1">Cell inner membrane</location>
        <topology evidence="1">Peripheral membrane protein</topology>
        <orientation evidence="1">Cytoplasmic side</orientation>
    </subcellularLocation>
    <subcellularLocation>
        <location evidence="1">Cytoplasm</location>
    </subcellularLocation>
    <text evidence="1">Distribution is 50-50.</text>
</comment>
<comment type="similarity">
    <text evidence="1">Belongs to the SecA family.</text>
</comment>
<accession>Q2L0B4</accession>
<organism>
    <name type="scientific">Bordetella avium (strain 197N)</name>
    <dbReference type="NCBI Taxonomy" id="360910"/>
    <lineage>
        <taxon>Bacteria</taxon>
        <taxon>Pseudomonadati</taxon>
        <taxon>Pseudomonadota</taxon>
        <taxon>Betaproteobacteria</taxon>
        <taxon>Burkholderiales</taxon>
        <taxon>Alcaligenaceae</taxon>
        <taxon>Bordetella</taxon>
    </lineage>
</organism>
<keyword id="KW-0067">ATP-binding</keyword>
<keyword id="KW-0997">Cell inner membrane</keyword>
<keyword id="KW-1003">Cell membrane</keyword>
<keyword id="KW-0963">Cytoplasm</keyword>
<keyword id="KW-0472">Membrane</keyword>
<keyword id="KW-0547">Nucleotide-binding</keyword>
<keyword id="KW-0653">Protein transport</keyword>
<keyword id="KW-1185">Reference proteome</keyword>
<keyword id="KW-1278">Translocase</keyword>
<keyword id="KW-0811">Translocation</keyword>
<keyword id="KW-0813">Transport</keyword>
<name>SECA2_BORA1</name>
<proteinExistence type="inferred from homology"/>
<sequence length="660" mass="72824">MESFSALAPDPLYPEKESERHANKLEAWGTAVLRWLSRKRRQPLWRTRRILKQVHAEAALLAGLDLAGVRARADEVAFELRCDGITQASAARAFALVRQAGKLALGKAHFDVQLLGGWAMLQGMVAEMNTGEGKTLTATLPAATAALAGLPVHVITTNDYLVERDAQIMSPLYEALGLTVRWVSMDMEPAQRRLAYQADIVYCSNKTLVFDYLRDLIVLDDDKDEDRLRLERLRGGSGRLSELFLRGLCFAIVDEADSVLVDEARTPLIISGSQKEDGGAVTGQALALAQAMQAGHYRVQPAARRVVLTEAGRAYLREACAAWPAPWSIPFRREELILSALTVLHLYKRDEQYIVRDGKVMVVDEFTGRVMPDRSWGQGVHQMIEHKEGLELSDPRVTLKSISYQRFFKHYLRLAGMTGTAAEIRGELGRVYNLPVVRIPTHRPSRRLHAPDSVYRTMAEKWSAVRERCRELHGRGVPVLIGTRSVAASEELARVLADAALPVVLLNAKQDADEASLIARAGEVGSIMIATNMAGRGTDIPLSAAARQAGGLHVILTERHESARIDRQLEGRSGRQGDPGHTEAILSLEDAVLDSVKNSLWAGPMNTLLAAQGPGWRGLAAHWLRHAQARTERKLARERRAMVSADEELENSLSFSGQGD</sequence>
<protein>
    <recommendedName>
        <fullName evidence="1">Protein translocase subunit SecA 2</fullName>
        <ecNumber evidence="1">7.4.2.8</ecNumber>
    </recommendedName>
</protein>
<feature type="chain" id="PRO_0000318327" description="Protein translocase subunit SecA 2">
    <location>
        <begin position="1"/>
        <end position="660"/>
    </location>
</feature>
<feature type="binding site" evidence="1">
    <location>
        <position position="113"/>
    </location>
    <ligand>
        <name>ATP</name>
        <dbReference type="ChEBI" id="CHEBI:30616"/>
    </ligand>
</feature>
<feature type="binding site" evidence="1">
    <location>
        <begin position="131"/>
        <end position="135"/>
    </location>
    <ligand>
        <name>ATP</name>
        <dbReference type="ChEBI" id="CHEBI:30616"/>
    </ligand>
</feature>
<feature type="binding site" evidence="1">
    <location>
        <position position="539"/>
    </location>
    <ligand>
        <name>ATP</name>
        <dbReference type="ChEBI" id="CHEBI:30616"/>
    </ligand>
</feature>
<dbReference type="EC" id="7.4.2.8" evidence="1"/>
<dbReference type="EMBL" id="AM167904">
    <property type="protein sequence ID" value="CAJ49550.1"/>
    <property type="molecule type" value="Genomic_DNA"/>
</dbReference>
<dbReference type="RefSeq" id="WP_012417608.1">
    <property type="nucleotide sequence ID" value="NC_010645.1"/>
</dbReference>
<dbReference type="SMR" id="Q2L0B4"/>
<dbReference type="STRING" id="360910.BAV1941"/>
<dbReference type="GeneID" id="92934997"/>
<dbReference type="KEGG" id="bav:BAV1941"/>
<dbReference type="eggNOG" id="COG0653">
    <property type="taxonomic scope" value="Bacteria"/>
</dbReference>
<dbReference type="HOGENOM" id="CLU_005314_3_2_4"/>
<dbReference type="OrthoDB" id="9805579at2"/>
<dbReference type="Proteomes" id="UP000001977">
    <property type="component" value="Chromosome"/>
</dbReference>
<dbReference type="GO" id="GO:0031522">
    <property type="term" value="C:cell envelope Sec protein transport complex"/>
    <property type="evidence" value="ECO:0007669"/>
    <property type="project" value="TreeGrafter"/>
</dbReference>
<dbReference type="GO" id="GO:0005829">
    <property type="term" value="C:cytosol"/>
    <property type="evidence" value="ECO:0007669"/>
    <property type="project" value="TreeGrafter"/>
</dbReference>
<dbReference type="GO" id="GO:0005886">
    <property type="term" value="C:plasma membrane"/>
    <property type="evidence" value="ECO:0007669"/>
    <property type="project" value="UniProtKB-SubCell"/>
</dbReference>
<dbReference type="GO" id="GO:0005524">
    <property type="term" value="F:ATP binding"/>
    <property type="evidence" value="ECO:0007669"/>
    <property type="project" value="UniProtKB-UniRule"/>
</dbReference>
<dbReference type="GO" id="GO:0008564">
    <property type="term" value="F:protein-exporting ATPase activity"/>
    <property type="evidence" value="ECO:0007669"/>
    <property type="project" value="UniProtKB-EC"/>
</dbReference>
<dbReference type="GO" id="GO:0065002">
    <property type="term" value="P:intracellular protein transmembrane transport"/>
    <property type="evidence" value="ECO:0007669"/>
    <property type="project" value="UniProtKB-UniRule"/>
</dbReference>
<dbReference type="GO" id="GO:0017038">
    <property type="term" value="P:protein import"/>
    <property type="evidence" value="ECO:0007669"/>
    <property type="project" value="InterPro"/>
</dbReference>
<dbReference type="GO" id="GO:0006605">
    <property type="term" value="P:protein targeting"/>
    <property type="evidence" value="ECO:0007669"/>
    <property type="project" value="UniProtKB-UniRule"/>
</dbReference>
<dbReference type="GO" id="GO:0043952">
    <property type="term" value="P:protein transport by the Sec complex"/>
    <property type="evidence" value="ECO:0007669"/>
    <property type="project" value="TreeGrafter"/>
</dbReference>
<dbReference type="CDD" id="cd17928">
    <property type="entry name" value="DEXDc_SecA"/>
    <property type="match status" value="1"/>
</dbReference>
<dbReference type="CDD" id="cd18803">
    <property type="entry name" value="SF2_C_secA"/>
    <property type="match status" value="1"/>
</dbReference>
<dbReference type="FunFam" id="3.40.50.300:FF:000429">
    <property type="entry name" value="Preprotein translocase subunit SecA"/>
    <property type="match status" value="1"/>
</dbReference>
<dbReference type="Gene3D" id="3.40.50.300">
    <property type="entry name" value="P-loop containing nucleotide triphosphate hydrolases"/>
    <property type="match status" value="2"/>
</dbReference>
<dbReference type="Gene3D" id="3.90.1440.10">
    <property type="entry name" value="SecA, preprotein cross-linking domain"/>
    <property type="match status" value="1"/>
</dbReference>
<dbReference type="HAMAP" id="MF_01382">
    <property type="entry name" value="SecA"/>
    <property type="match status" value="1"/>
</dbReference>
<dbReference type="InterPro" id="IPR014001">
    <property type="entry name" value="Helicase_ATP-bd"/>
</dbReference>
<dbReference type="InterPro" id="IPR001650">
    <property type="entry name" value="Helicase_C-like"/>
</dbReference>
<dbReference type="InterPro" id="IPR027417">
    <property type="entry name" value="P-loop_NTPase"/>
</dbReference>
<dbReference type="InterPro" id="IPR000185">
    <property type="entry name" value="SecA"/>
</dbReference>
<dbReference type="InterPro" id="IPR020937">
    <property type="entry name" value="SecA_CS"/>
</dbReference>
<dbReference type="InterPro" id="IPR011115">
    <property type="entry name" value="SecA_DEAD"/>
</dbReference>
<dbReference type="InterPro" id="IPR014018">
    <property type="entry name" value="SecA_motor_DEAD"/>
</dbReference>
<dbReference type="InterPro" id="IPR011130">
    <property type="entry name" value="SecA_preprotein_X-link_dom"/>
</dbReference>
<dbReference type="InterPro" id="IPR044722">
    <property type="entry name" value="SecA_SF2_C"/>
</dbReference>
<dbReference type="InterPro" id="IPR036670">
    <property type="entry name" value="SecA_X-link_sf"/>
</dbReference>
<dbReference type="PANTHER" id="PTHR30612:SF0">
    <property type="entry name" value="CHLOROPLAST PROTEIN-TRANSPORTING ATPASE"/>
    <property type="match status" value="1"/>
</dbReference>
<dbReference type="PANTHER" id="PTHR30612">
    <property type="entry name" value="SECA INNER MEMBRANE COMPONENT OF SEC PROTEIN SECRETION SYSTEM"/>
    <property type="match status" value="1"/>
</dbReference>
<dbReference type="Pfam" id="PF21090">
    <property type="entry name" value="P-loop_SecA"/>
    <property type="match status" value="2"/>
</dbReference>
<dbReference type="Pfam" id="PF07517">
    <property type="entry name" value="SecA_DEAD"/>
    <property type="match status" value="1"/>
</dbReference>
<dbReference type="Pfam" id="PF01043">
    <property type="entry name" value="SecA_PP_bind"/>
    <property type="match status" value="1"/>
</dbReference>
<dbReference type="PRINTS" id="PR00906">
    <property type="entry name" value="SECA"/>
</dbReference>
<dbReference type="SMART" id="SM00957">
    <property type="entry name" value="SecA_DEAD"/>
    <property type="match status" value="1"/>
</dbReference>
<dbReference type="SMART" id="SM00958">
    <property type="entry name" value="SecA_PP_bind"/>
    <property type="match status" value="1"/>
</dbReference>
<dbReference type="SUPFAM" id="SSF52540">
    <property type="entry name" value="P-loop containing nucleoside triphosphate hydrolases"/>
    <property type="match status" value="2"/>
</dbReference>
<dbReference type="SUPFAM" id="SSF81767">
    <property type="entry name" value="Pre-protein crosslinking domain of SecA"/>
    <property type="match status" value="1"/>
</dbReference>
<dbReference type="PROSITE" id="PS01312">
    <property type="entry name" value="SECA"/>
    <property type="match status" value="1"/>
</dbReference>
<dbReference type="PROSITE" id="PS51196">
    <property type="entry name" value="SECA_MOTOR_DEAD"/>
    <property type="match status" value="1"/>
</dbReference>
<evidence type="ECO:0000255" key="1">
    <source>
        <dbReference type="HAMAP-Rule" id="MF_01382"/>
    </source>
</evidence>
<gene>
    <name evidence="1" type="primary">secA2</name>
    <name type="ordered locus">BAV1941</name>
</gene>